<dbReference type="EC" id="3.1.-.-" evidence="1"/>
<dbReference type="EMBL" id="AL596168">
    <property type="protein sequence ID" value="CAC96768.1"/>
    <property type="molecule type" value="Genomic_DNA"/>
</dbReference>
<dbReference type="PIR" id="AH1624">
    <property type="entry name" value="AH1624"/>
</dbReference>
<dbReference type="SMR" id="Q92BL1"/>
<dbReference type="STRING" id="272626.gene:17565868"/>
<dbReference type="KEGG" id="lin:lin1537"/>
<dbReference type="eggNOG" id="COG0816">
    <property type="taxonomic scope" value="Bacteria"/>
</dbReference>
<dbReference type="HOGENOM" id="CLU_098240_2_0_9"/>
<dbReference type="OrthoDB" id="9796140at2"/>
<dbReference type="Proteomes" id="UP000002513">
    <property type="component" value="Chromosome"/>
</dbReference>
<dbReference type="GO" id="GO:0005829">
    <property type="term" value="C:cytosol"/>
    <property type="evidence" value="ECO:0007669"/>
    <property type="project" value="TreeGrafter"/>
</dbReference>
<dbReference type="GO" id="GO:0004518">
    <property type="term" value="F:nuclease activity"/>
    <property type="evidence" value="ECO:0007669"/>
    <property type="project" value="UniProtKB-KW"/>
</dbReference>
<dbReference type="GO" id="GO:0000967">
    <property type="term" value="P:rRNA 5'-end processing"/>
    <property type="evidence" value="ECO:0007669"/>
    <property type="project" value="UniProtKB-UniRule"/>
</dbReference>
<dbReference type="CDD" id="cd16964">
    <property type="entry name" value="YqgF"/>
    <property type="match status" value="1"/>
</dbReference>
<dbReference type="FunFam" id="3.30.420.140:FF:000003">
    <property type="entry name" value="Putative pre-16S rRNA nuclease"/>
    <property type="match status" value="1"/>
</dbReference>
<dbReference type="Gene3D" id="3.30.420.140">
    <property type="entry name" value="YqgF/RNase H-like domain"/>
    <property type="match status" value="1"/>
</dbReference>
<dbReference type="HAMAP" id="MF_00651">
    <property type="entry name" value="Nuclease_YqgF"/>
    <property type="match status" value="1"/>
</dbReference>
<dbReference type="InterPro" id="IPR012337">
    <property type="entry name" value="RNaseH-like_sf"/>
</dbReference>
<dbReference type="InterPro" id="IPR005227">
    <property type="entry name" value="YqgF"/>
</dbReference>
<dbReference type="InterPro" id="IPR006641">
    <property type="entry name" value="YqgF/RNaseH-like_dom"/>
</dbReference>
<dbReference type="InterPro" id="IPR037027">
    <property type="entry name" value="YqgF/RNaseH-like_dom_sf"/>
</dbReference>
<dbReference type="NCBIfam" id="TIGR00250">
    <property type="entry name" value="RNAse_H_YqgF"/>
    <property type="match status" value="1"/>
</dbReference>
<dbReference type="PANTHER" id="PTHR33317">
    <property type="entry name" value="POLYNUCLEOTIDYL TRANSFERASE, RIBONUCLEASE H-LIKE SUPERFAMILY PROTEIN"/>
    <property type="match status" value="1"/>
</dbReference>
<dbReference type="PANTHER" id="PTHR33317:SF4">
    <property type="entry name" value="POLYNUCLEOTIDYL TRANSFERASE, RIBONUCLEASE H-LIKE SUPERFAMILY PROTEIN"/>
    <property type="match status" value="1"/>
</dbReference>
<dbReference type="Pfam" id="PF03652">
    <property type="entry name" value="RuvX"/>
    <property type="match status" value="1"/>
</dbReference>
<dbReference type="SMART" id="SM00732">
    <property type="entry name" value="YqgFc"/>
    <property type="match status" value="1"/>
</dbReference>
<dbReference type="SUPFAM" id="SSF53098">
    <property type="entry name" value="Ribonuclease H-like"/>
    <property type="match status" value="1"/>
</dbReference>
<keyword id="KW-0963">Cytoplasm</keyword>
<keyword id="KW-0378">Hydrolase</keyword>
<keyword id="KW-0540">Nuclease</keyword>
<keyword id="KW-0690">Ribosome biogenesis</keyword>
<gene>
    <name type="ordered locus">lin1537</name>
</gene>
<evidence type="ECO:0000255" key="1">
    <source>
        <dbReference type="HAMAP-Rule" id="MF_00651"/>
    </source>
</evidence>
<reference key="1">
    <citation type="journal article" date="2001" name="Science">
        <title>Comparative genomics of Listeria species.</title>
        <authorList>
            <person name="Glaser P."/>
            <person name="Frangeul L."/>
            <person name="Buchrieser C."/>
            <person name="Rusniok C."/>
            <person name="Amend A."/>
            <person name="Baquero F."/>
            <person name="Berche P."/>
            <person name="Bloecker H."/>
            <person name="Brandt P."/>
            <person name="Chakraborty T."/>
            <person name="Charbit A."/>
            <person name="Chetouani F."/>
            <person name="Couve E."/>
            <person name="de Daruvar A."/>
            <person name="Dehoux P."/>
            <person name="Domann E."/>
            <person name="Dominguez-Bernal G."/>
            <person name="Duchaud E."/>
            <person name="Durant L."/>
            <person name="Dussurget O."/>
            <person name="Entian K.-D."/>
            <person name="Fsihi H."/>
            <person name="Garcia-del Portillo F."/>
            <person name="Garrido P."/>
            <person name="Gautier L."/>
            <person name="Goebel W."/>
            <person name="Gomez-Lopez N."/>
            <person name="Hain T."/>
            <person name="Hauf J."/>
            <person name="Jackson D."/>
            <person name="Jones L.-M."/>
            <person name="Kaerst U."/>
            <person name="Kreft J."/>
            <person name="Kuhn M."/>
            <person name="Kunst F."/>
            <person name="Kurapkat G."/>
            <person name="Madueno E."/>
            <person name="Maitournam A."/>
            <person name="Mata Vicente J."/>
            <person name="Ng E."/>
            <person name="Nedjari H."/>
            <person name="Nordsiek G."/>
            <person name="Novella S."/>
            <person name="de Pablos B."/>
            <person name="Perez-Diaz J.-C."/>
            <person name="Purcell R."/>
            <person name="Remmel B."/>
            <person name="Rose M."/>
            <person name="Schlueter T."/>
            <person name="Simoes N."/>
            <person name="Tierrez A."/>
            <person name="Vazquez-Boland J.-A."/>
            <person name="Voss H."/>
            <person name="Wehland J."/>
            <person name="Cossart P."/>
        </authorList>
    </citation>
    <scope>NUCLEOTIDE SEQUENCE [LARGE SCALE GENOMIC DNA]</scope>
    <source>
        <strain>ATCC BAA-680 / CLIP 11262</strain>
    </source>
</reference>
<accession>Q92BL1</accession>
<organism>
    <name type="scientific">Listeria innocua serovar 6a (strain ATCC BAA-680 / CLIP 11262)</name>
    <dbReference type="NCBI Taxonomy" id="272626"/>
    <lineage>
        <taxon>Bacteria</taxon>
        <taxon>Bacillati</taxon>
        <taxon>Bacillota</taxon>
        <taxon>Bacilli</taxon>
        <taxon>Bacillales</taxon>
        <taxon>Listeriaceae</taxon>
        <taxon>Listeria</taxon>
    </lineage>
</organism>
<feature type="chain" id="PRO_0000172084" description="Putative pre-16S rRNA nuclease">
    <location>
        <begin position="1"/>
        <end position="138"/>
    </location>
</feature>
<comment type="function">
    <text evidence="1">Could be a nuclease involved in processing of the 5'-end of pre-16S rRNA.</text>
</comment>
<comment type="subcellular location">
    <subcellularLocation>
        <location evidence="1">Cytoplasm</location>
    </subcellularLocation>
</comment>
<comment type="similarity">
    <text evidence="1">Belongs to the YqgF nuclease family.</text>
</comment>
<protein>
    <recommendedName>
        <fullName evidence="1">Putative pre-16S rRNA nuclease</fullName>
        <ecNumber evidence="1">3.1.-.-</ecNumber>
    </recommendedName>
</protein>
<sequence>MRIMGLDVGSKTVGVAISDPLGWTAQGVETIQIDESRKQFGYDRVKELVLEYEVEKVVVGLPKNMNNTIGPRAESSKIYAEVLESRIGLPVVLWDERLTTSAAERTLIEADVSRKKRKEVIDKLAAVMILQSYLDTTN</sequence>
<proteinExistence type="inferred from homology"/>
<name>YQGF_LISIN</name>